<comment type="function">
    <text evidence="1">Catalyzes the condensation of carbamoyl phosphate and aspartate to form carbamoyl aspartate and inorganic phosphate, the committed step in the de novo pyrimidine nucleotide biosynthesis pathway.</text>
</comment>
<comment type="catalytic activity">
    <reaction evidence="1">
        <text>carbamoyl phosphate + L-aspartate = N-carbamoyl-L-aspartate + phosphate + H(+)</text>
        <dbReference type="Rhea" id="RHEA:20013"/>
        <dbReference type="ChEBI" id="CHEBI:15378"/>
        <dbReference type="ChEBI" id="CHEBI:29991"/>
        <dbReference type="ChEBI" id="CHEBI:32814"/>
        <dbReference type="ChEBI" id="CHEBI:43474"/>
        <dbReference type="ChEBI" id="CHEBI:58228"/>
        <dbReference type="EC" id="2.1.3.2"/>
    </reaction>
</comment>
<comment type="activity regulation">
    <text evidence="2">Feedback inhibited by UMP.</text>
</comment>
<comment type="pathway">
    <text evidence="1">Pyrimidine metabolism; UMP biosynthesis via de novo pathway; (S)-dihydroorotate from bicarbonate: step 2/3.</text>
</comment>
<comment type="subunit">
    <text evidence="5">Homotrimer.</text>
</comment>
<comment type="subcellular location">
    <subcellularLocation>
        <location evidence="5">Plastid</location>
        <location evidence="5">Chloroplast</location>
    </subcellularLocation>
</comment>
<comment type="similarity">
    <text evidence="5">Belongs to the aspartate/ornithine carbamoyltransferase superfamily. ATCase family.</text>
</comment>
<reference key="1">
    <citation type="submission" date="2000-01" db="EMBL/GenBank/DDBJ databases">
        <title>Oryza sativa mRNA for aspartate carbamoyl transferase.</title>
        <authorList>
            <person name="Ito Y."/>
        </authorList>
    </citation>
    <scope>NUCLEOTIDE SEQUENCE [GENOMIC DNA / MRNA]</scope>
    <source>
        <strain>cv. Nipponbare</strain>
    </source>
</reference>
<reference key="2">
    <citation type="journal article" date="2005" name="Nature">
        <title>The map-based sequence of the rice genome.</title>
        <authorList>
            <consortium name="International rice genome sequencing project (IRGSP)"/>
        </authorList>
    </citation>
    <scope>NUCLEOTIDE SEQUENCE [LARGE SCALE GENOMIC DNA]</scope>
    <source>
        <strain>cv. Nipponbare</strain>
    </source>
</reference>
<reference key="3">
    <citation type="journal article" date="2008" name="Nucleic Acids Res.">
        <title>The rice annotation project database (RAP-DB): 2008 update.</title>
        <authorList>
            <consortium name="The rice annotation project (RAP)"/>
        </authorList>
    </citation>
    <scope>GENOME REANNOTATION</scope>
    <source>
        <strain>cv. Nipponbare</strain>
    </source>
</reference>
<reference key="4">
    <citation type="journal article" date="2013" name="Rice">
        <title>Improvement of the Oryza sativa Nipponbare reference genome using next generation sequence and optical map data.</title>
        <authorList>
            <person name="Kawahara Y."/>
            <person name="de la Bastide M."/>
            <person name="Hamilton J.P."/>
            <person name="Kanamori H."/>
            <person name="McCombie W.R."/>
            <person name="Ouyang S."/>
            <person name="Schwartz D.C."/>
            <person name="Tanaka T."/>
            <person name="Wu J."/>
            <person name="Zhou S."/>
            <person name="Childs K.L."/>
            <person name="Davidson R.M."/>
            <person name="Lin H."/>
            <person name="Quesada-Ocampo L."/>
            <person name="Vaillancourt B."/>
            <person name="Sakai H."/>
            <person name="Lee S.S."/>
            <person name="Kim J."/>
            <person name="Numa H."/>
            <person name="Itoh T."/>
            <person name="Buell C.R."/>
            <person name="Matsumoto T."/>
        </authorList>
    </citation>
    <scope>GENOME REANNOTATION</scope>
    <source>
        <strain>cv. Nipponbare</strain>
    </source>
</reference>
<reference key="5">
    <citation type="journal article" date="2005" name="PLoS Biol.">
        <title>The genomes of Oryza sativa: a history of duplications.</title>
        <authorList>
            <person name="Yu J."/>
            <person name="Wang J."/>
            <person name="Lin W."/>
            <person name="Li S."/>
            <person name="Li H."/>
            <person name="Zhou J."/>
            <person name="Ni P."/>
            <person name="Dong W."/>
            <person name="Hu S."/>
            <person name="Zeng C."/>
            <person name="Zhang J."/>
            <person name="Zhang Y."/>
            <person name="Li R."/>
            <person name="Xu Z."/>
            <person name="Li S."/>
            <person name="Li X."/>
            <person name="Zheng H."/>
            <person name="Cong L."/>
            <person name="Lin L."/>
            <person name="Yin J."/>
            <person name="Geng J."/>
            <person name="Li G."/>
            <person name="Shi J."/>
            <person name="Liu J."/>
            <person name="Lv H."/>
            <person name="Li J."/>
            <person name="Wang J."/>
            <person name="Deng Y."/>
            <person name="Ran L."/>
            <person name="Shi X."/>
            <person name="Wang X."/>
            <person name="Wu Q."/>
            <person name="Li C."/>
            <person name="Ren X."/>
            <person name="Wang J."/>
            <person name="Wang X."/>
            <person name="Li D."/>
            <person name="Liu D."/>
            <person name="Zhang X."/>
            <person name="Ji Z."/>
            <person name="Zhao W."/>
            <person name="Sun Y."/>
            <person name="Zhang Z."/>
            <person name="Bao J."/>
            <person name="Han Y."/>
            <person name="Dong L."/>
            <person name="Ji J."/>
            <person name="Chen P."/>
            <person name="Wu S."/>
            <person name="Liu J."/>
            <person name="Xiao Y."/>
            <person name="Bu D."/>
            <person name="Tan J."/>
            <person name="Yang L."/>
            <person name="Ye C."/>
            <person name="Zhang J."/>
            <person name="Xu J."/>
            <person name="Zhou Y."/>
            <person name="Yu Y."/>
            <person name="Zhang B."/>
            <person name="Zhuang S."/>
            <person name="Wei H."/>
            <person name="Liu B."/>
            <person name="Lei M."/>
            <person name="Yu H."/>
            <person name="Li Y."/>
            <person name="Xu H."/>
            <person name="Wei S."/>
            <person name="He X."/>
            <person name="Fang L."/>
            <person name="Zhang Z."/>
            <person name="Zhang Y."/>
            <person name="Huang X."/>
            <person name="Su Z."/>
            <person name="Tong W."/>
            <person name="Li J."/>
            <person name="Tong Z."/>
            <person name="Li S."/>
            <person name="Ye J."/>
            <person name="Wang L."/>
            <person name="Fang L."/>
            <person name="Lei T."/>
            <person name="Chen C.-S."/>
            <person name="Chen H.-C."/>
            <person name="Xu Z."/>
            <person name="Li H."/>
            <person name="Huang H."/>
            <person name="Zhang F."/>
            <person name="Xu H."/>
            <person name="Li N."/>
            <person name="Zhao C."/>
            <person name="Li S."/>
            <person name="Dong L."/>
            <person name="Huang Y."/>
            <person name="Li L."/>
            <person name="Xi Y."/>
            <person name="Qi Q."/>
            <person name="Li W."/>
            <person name="Zhang B."/>
            <person name="Hu W."/>
            <person name="Zhang Y."/>
            <person name="Tian X."/>
            <person name="Jiao Y."/>
            <person name="Liang X."/>
            <person name="Jin J."/>
            <person name="Gao L."/>
            <person name="Zheng W."/>
            <person name="Hao B."/>
            <person name="Liu S.-M."/>
            <person name="Wang W."/>
            <person name="Yuan L."/>
            <person name="Cao M."/>
            <person name="McDermott J."/>
            <person name="Samudrala R."/>
            <person name="Wang J."/>
            <person name="Wong G.K.-S."/>
            <person name="Yang H."/>
        </authorList>
    </citation>
    <scope>NUCLEOTIDE SEQUENCE [LARGE SCALE GENOMIC DNA]</scope>
    <source>
        <strain>cv. Nipponbare</strain>
    </source>
</reference>
<keyword id="KW-0021">Allosteric enzyme</keyword>
<keyword id="KW-0150">Chloroplast</keyword>
<keyword id="KW-0934">Plastid</keyword>
<keyword id="KW-0665">Pyrimidine biosynthesis</keyword>
<keyword id="KW-1185">Reference proteome</keyword>
<keyword id="KW-0808">Transferase</keyword>
<keyword id="KW-0809">Transit peptide</keyword>
<evidence type="ECO:0000250" key="1">
    <source>
        <dbReference type="UniProtKB" id="P0A786"/>
    </source>
</evidence>
<evidence type="ECO:0000250" key="2">
    <source>
        <dbReference type="UniProtKB" id="P49077"/>
    </source>
</evidence>
<evidence type="ECO:0000255" key="3"/>
<evidence type="ECO:0000256" key="4">
    <source>
        <dbReference type="SAM" id="MobiDB-lite"/>
    </source>
</evidence>
<evidence type="ECO:0000305" key="5"/>
<sequence>MAAARATLPLPRVPAPSPRPQLRPFPSLPARRGAVACGAGSAAAGVAASLRLGDVIEAQQFDRDALTEIFEVAREMEALERGSSSRGAGRSRVLEGYLMATLFYEPSTRTRLSFEAAMRRLGGEVLTTENAREFSSAAKGETLEDTIRTVEGYSDIIVLRHFESGAARRAAATADIPVINAGDGPGQHPTQALLDVYSIEREIGTLDGIKLGLVGDLANGRTVRSLAYLIAKYQNIKIYFVSPDVVKMKDDIKEYLTSQGVEWEESSDLLEVASKCDVIYQTRIQKERFGERIDLYEAARGKYIVDKKVLDVLPKHAVIMHPLPRLDEITIDVDSDPRAAYFRQAKNGLYIRMALLKLLLVGR</sequence>
<gene>
    <name type="primary">PYRB</name>
    <name type="ordered locus">Os08g0248800</name>
    <name type="ordered locus">LOC_Os08g15030</name>
    <name type="ORF">OsJ_26609</name>
    <name type="ORF">OSJNBa0012K14.1</name>
    <name type="ORF">OSJNBb0003H03.24</name>
</gene>
<dbReference type="EC" id="2.1.3.2" evidence="1"/>
<dbReference type="EMBL" id="AB037416">
    <property type="protein sequence ID" value="BAB03303.1"/>
    <property type="molecule type" value="mRNA"/>
</dbReference>
<dbReference type="EMBL" id="AB037417">
    <property type="protein sequence ID" value="BAB03304.1"/>
    <property type="molecule type" value="Genomic_DNA"/>
</dbReference>
<dbReference type="EMBL" id="AP005495">
    <property type="protein sequence ID" value="BAD05680.1"/>
    <property type="molecule type" value="Genomic_DNA"/>
</dbReference>
<dbReference type="EMBL" id="AP005799">
    <property type="protein sequence ID" value="BAD05837.1"/>
    <property type="molecule type" value="Genomic_DNA"/>
</dbReference>
<dbReference type="EMBL" id="AP008214">
    <property type="protein sequence ID" value="BAF23281.1"/>
    <property type="molecule type" value="Genomic_DNA"/>
</dbReference>
<dbReference type="EMBL" id="AP014964">
    <property type="protein sequence ID" value="BAT04546.1"/>
    <property type="molecule type" value="Genomic_DNA"/>
</dbReference>
<dbReference type="EMBL" id="CM000145">
    <property type="protein sequence ID" value="EAZ42049.1"/>
    <property type="molecule type" value="Genomic_DNA"/>
</dbReference>
<dbReference type="RefSeq" id="XP_015648312.1">
    <property type="nucleotide sequence ID" value="XM_015792826.1"/>
</dbReference>
<dbReference type="SMR" id="Q9LD61"/>
<dbReference type="FunCoup" id="Q9LD61">
    <property type="interactions" value="755"/>
</dbReference>
<dbReference type="STRING" id="39947.Q9LD61"/>
<dbReference type="PaxDb" id="39947-Q9LD61"/>
<dbReference type="EnsemblPlants" id="Os08t0248800-01">
    <property type="protein sequence ID" value="Os08t0248800-01"/>
    <property type="gene ID" value="Os08g0248800"/>
</dbReference>
<dbReference type="Gramene" id="Os08t0248800-01">
    <property type="protein sequence ID" value="Os08t0248800-01"/>
    <property type="gene ID" value="Os08g0248800"/>
</dbReference>
<dbReference type="KEGG" id="dosa:Os08g0248800"/>
<dbReference type="eggNOG" id="KOG0370">
    <property type="taxonomic scope" value="Eukaryota"/>
</dbReference>
<dbReference type="HOGENOM" id="CLU_043846_1_1_1"/>
<dbReference type="InParanoid" id="Q9LD61"/>
<dbReference type="OMA" id="VLIMHPG"/>
<dbReference type="OrthoDB" id="1924069at2759"/>
<dbReference type="PlantReactome" id="R-OSA-1119444">
    <property type="pathway name" value="Canavanine biosynthesis"/>
</dbReference>
<dbReference type="UniPathway" id="UPA00070">
    <property type="reaction ID" value="UER00116"/>
</dbReference>
<dbReference type="Proteomes" id="UP000000763">
    <property type="component" value="Chromosome 8"/>
</dbReference>
<dbReference type="Proteomes" id="UP000007752">
    <property type="component" value="Chromosome 8"/>
</dbReference>
<dbReference type="Proteomes" id="UP000059680">
    <property type="component" value="Chromosome 8"/>
</dbReference>
<dbReference type="GO" id="GO:0009507">
    <property type="term" value="C:chloroplast"/>
    <property type="evidence" value="ECO:0007669"/>
    <property type="project" value="UniProtKB-SubCell"/>
</dbReference>
<dbReference type="GO" id="GO:0005737">
    <property type="term" value="C:cytoplasm"/>
    <property type="evidence" value="ECO:0000318"/>
    <property type="project" value="GO_Central"/>
</dbReference>
<dbReference type="GO" id="GO:0016597">
    <property type="term" value="F:amino acid binding"/>
    <property type="evidence" value="ECO:0007669"/>
    <property type="project" value="InterPro"/>
</dbReference>
<dbReference type="GO" id="GO:0004070">
    <property type="term" value="F:aspartate carbamoyltransferase activity"/>
    <property type="evidence" value="ECO:0000318"/>
    <property type="project" value="GO_Central"/>
</dbReference>
<dbReference type="GO" id="GO:0006207">
    <property type="term" value="P:'de novo' pyrimidine nucleobase biosynthetic process"/>
    <property type="evidence" value="ECO:0007669"/>
    <property type="project" value="InterPro"/>
</dbReference>
<dbReference type="GO" id="GO:0044205">
    <property type="term" value="P:'de novo' UMP biosynthetic process"/>
    <property type="evidence" value="ECO:0007669"/>
    <property type="project" value="UniProtKB-UniPathway"/>
</dbReference>
<dbReference type="GO" id="GO:0016036">
    <property type="term" value="P:cellular response to phosphate starvation"/>
    <property type="evidence" value="ECO:0007669"/>
    <property type="project" value="EnsemblPlants"/>
</dbReference>
<dbReference type="GO" id="GO:0006541">
    <property type="term" value="P:glutamine metabolic process"/>
    <property type="evidence" value="ECO:0000318"/>
    <property type="project" value="GO_Central"/>
</dbReference>
<dbReference type="FunFam" id="3.40.50.1370:FF:000001">
    <property type="entry name" value="Aspartate carbamoyltransferase"/>
    <property type="match status" value="1"/>
</dbReference>
<dbReference type="FunFam" id="3.40.50.1370:FF:000002">
    <property type="entry name" value="Aspartate carbamoyltransferase 2"/>
    <property type="match status" value="1"/>
</dbReference>
<dbReference type="Gene3D" id="3.40.50.1370">
    <property type="entry name" value="Aspartate/ornithine carbamoyltransferase"/>
    <property type="match status" value="2"/>
</dbReference>
<dbReference type="HAMAP" id="MF_00001">
    <property type="entry name" value="Asp_carb_tr"/>
    <property type="match status" value="1"/>
</dbReference>
<dbReference type="InterPro" id="IPR006132">
    <property type="entry name" value="Asp/Orn_carbamoyltranf_P-bd"/>
</dbReference>
<dbReference type="InterPro" id="IPR006130">
    <property type="entry name" value="Asp/Orn_carbamoylTrfase"/>
</dbReference>
<dbReference type="InterPro" id="IPR036901">
    <property type="entry name" value="Asp/Orn_carbamoylTrfase_sf"/>
</dbReference>
<dbReference type="InterPro" id="IPR002082">
    <property type="entry name" value="Asp_carbamoyltransf"/>
</dbReference>
<dbReference type="InterPro" id="IPR006131">
    <property type="entry name" value="Asp_carbamoyltransf_Asp/Orn-bd"/>
</dbReference>
<dbReference type="NCBIfam" id="TIGR00670">
    <property type="entry name" value="asp_carb_tr"/>
    <property type="match status" value="1"/>
</dbReference>
<dbReference type="NCBIfam" id="NF002032">
    <property type="entry name" value="PRK00856.1"/>
    <property type="match status" value="1"/>
</dbReference>
<dbReference type="PANTHER" id="PTHR45753:SF6">
    <property type="entry name" value="ASPARTATE CARBAMOYLTRANSFERASE"/>
    <property type="match status" value="1"/>
</dbReference>
<dbReference type="PANTHER" id="PTHR45753">
    <property type="entry name" value="ORNITHINE CARBAMOYLTRANSFERASE, MITOCHONDRIAL"/>
    <property type="match status" value="1"/>
</dbReference>
<dbReference type="Pfam" id="PF00185">
    <property type="entry name" value="OTCace"/>
    <property type="match status" value="1"/>
</dbReference>
<dbReference type="Pfam" id="PF02729">
    <property type="entry name" value="OTCace_N"/>
    <property type="match status" value="1"/>
</dbReference>
<dbReference type="PRINTS" id="PR00100">
    <property type="entry name" value="AOTCASE"/>
</dbReference>
<dbReference type="PRINTS" id="PR00101">
    <property type="entry name" value="ATCASE"/>
</dbReference>
<dbReference type="SUPFAM" id="SSF53671">
    <property type="entry name" value="Aspartate/ornithine carbamoyltransferase"/>
    <property type="match status" value="1"/>
</dbReference>
<dbReference type="PROSITE" id="PS00097">
    <property type="entry name" value="CARBAMOYLTRANSFERASE"/>
    <property type="match status" value="1"/>
</dbReference>
<organism>
    <name type="scientific">Oryza sativa subsp. japonica</name>
    <name type="common">Rice</name>
    <dbReference type="NCBI Taxonomy" id="39947"/>
    <lineage>
        <taxon>Eukaryota</taxon>
        <taxon>Viridiplantae</taxon>
        <taxon>Streptophyta</taxon>
        <taxon>Embryophyta</taxon>
        <taxon>Tracheophyta</taxon>
        <taxon>Spermatophyta</taxon>
        <taxon>Magnoliopsida</taxon>
        <taxon>Liliopsida</taxon>
        <taxon>Poales</taxon>
        <taxon>Poaceae</taxon>
        <taxon>BOP clade</taxon>
        <taxon>Oryzoideae</taxon>
        <taxon>Oryzeae</taxon>
        <taxon>Oryzinae</taxon>
        <taxon>Oryza</taxon>
        <taxon>Oryza sativa</taxon>
    </lineage>
</organism>
<name>PYRB_ORYSJ</name>
<proteinExistence type="evidence at transcript level"/>
<protein>
    <recommendedName>
        <fullName>Aspartate carbamoyltransferase, chloroplastic</fullName>
        <ecNumber evidence="1">2.1.3.2</ecNumber>
    </recommendedName>
    <alternativeName>
        <fullName>Aspartate transcarbamylase</fullName>
        <shortName>ATCase</shortName>
    </alternativeName>
</protein>
<feature type="transit peptide" description="Chloroplast" evidence="3">
    <location>
        <begin position="1"/>
        <end position="36"/>
    </location>
</feature>
<feature type="chain" id="PRO_0000423078" description="Aspartate carbamoyltransferase, chloroplastic">
    <location>
        <begin position="37"/>
        <end position="363"/>
    </location>
</feature>
<feature type="region of interest" description="Disordered" evidence="4">
    <location>
        <begin position="1"/>
        <end position="21"/>
    </location>
</feature>
<feature type="compositionally biased region" description="Pro residues" evidence="4">
    <location>
        <begin position="11"/>
        <end position="21"/>
    </location>
</feature>
<feature type="binding site" evidence="1">
    <location>
        <position position="109"/>
    </location>
    <ligand>
        <name>carbamoyl phosphate</name>
        <dbReference type="ChEBI" id="CHEBI:58228"/>
    </ligand>
</feature>
<feature type="binding site" evidence="2">
    <location>
        <position position="109"/>
    </location>
    <ligand>
        <name>UMP</name>
        <dbReference type="ChEBI" id="CHEBI:57865"/>
        <note>inhibitor</note>
    </ligand>
</feature>
<feature type="binding site" evidence="1">
    <location>
        <position position="110"/>
    </location>
    <ligand>
        <name>carbamoyl phosphate</name>
        <dbReference type="ChEBI" id="CHEBI:58228"/>
    </ligand>
</feature>
<feature type="binding site" evidence="2">
    <location>
        <position position="110"/>
    </location>
    <ligand>
        <name>UMP</name>
        <dbReference type="ChEBI" id="CHEBI:57865"/>
        <note>inhibitor</note>
    </ligand>
</feature>
<feature type="binding site" evidence="1">
    <location>
        <position position="139"/>
    </location>
    <ligand>
        <name>L-aspartate</name>
        <dbReference type="ChEBI" id="CHEBI:29991"/>
    </ligand>
</feature>
<feature type="binding site" evidence="1">
    <location>
        <position position="160"/>
    </location>
    <ligand>
        <name>carbamoyl phosphate</name>
        <dbReference type="ChEBI" id="CHEBI:58228"/>
    </ligand>
</feature>
<feature type="binding site" evidence="2">
    <location>
        <position position="160"/>
    </location>
    <ligand>
        <name>UMP</name>
        <dbReference type="ChEBI" id="CHEBI:57865"/>
        <note>inhibitor</note>
    </ligand>
</feature>
<feature type="binding site" evidence="1">
    <location>
        <position position="188"/>
    </location>
    <ligand>
        <name>carbamoyl phosphate</name>
        <dbReference type="ChEBI" id="CHEBI:58228"/>
    </ligand>
</feature>
<feature type="binding site" evidence="2">
    <location>
        <position position="188"/>
    </location>
    <ligand>
        <name>UMP</name>
        <dbReference type="ChEBI" id="CHEBI:57865"/>
        <note>inhibitor</note>
    </ligand>
</feature>
<feature type="binding site" evidence="1">
    <location>
        <position position="191"/>
    </location>
    <ligand>
        <name>carbamoyl phosphate</name>
        <dbReference type="ChEBI" id="CHEBI:58228"/>
    </ligand>
</feature>
<feature type="binding site" evidence="1">
    <location>
        <position position="221"/>
    </location>
    <ligand>
        <name>L-aspartate</name>
        <dbReference type="ChEBI" id="CHEBI:29991"/>
    </ligand>
</feature>
<feature type="binding site" evidence="2">
    <location>
        <position position="221"/>
    </location>
    <ligand>
        <name>UMP</name>
        <dbReference type="ChEBI" id="CHEBI:57865"/>
        <note>inhibitor</note>
    </ligand>
</feature>
<feature type="binding site" evidence="1">
    <location>
        <position position="283"/>
    </location>
    <ligand>
        <name>L-aspartate</name>
        <dbReference type="ChEBI" id="CHEBI:29991"/>
    </ligand>
</feature>
<feature type="binding site" evidence="2">
    <location>
        <position position="283"/>
    </location>
    <ligand>
        <name>UMP</name>
        <dbReference type="ChEBI" id="CHEBI:57865"/>
        <note>inhibitor</note>
    </ligand>
</feature>
<feature type="binding site" evidence="1">
    <location>
        <position position="323"/>
    </location>
    <ligand>
        <name>carbamoyl phosphate</name>
        <dbReference type="ChEBI" id="CHEBI:58228"/>
    </ligand>
</feature>
<feature type="binding site" evidence="1">
    <location>
        <position position="324"/>
    </location>
    <ligand>
        <name>carbamoyl phosphate</name>
        <dbReference type="ChEBI" id="CHEBI:58228"/>
    </ligand>
</feature>
<accession>Q9LD61</accession>
<accession>A0A0N7KPI9</accession>